<dbReference type="EC" id="2.5.1.21" evidence="5 7"/>
<dbReference type="EMBL" id="M63979">
    <property type="protein sequence ID" value="AAA34597.1"/>
    <property type="molecule type" value="Genomic_DNA"/>
</dbReference>
<dbReference type="EMBL" id="X59959">
    <property type="protein sequence ID" value="CAA42583.1"/>
    <property type="molecule type" value="Genomic_DNA"/>
</dbReference>
<dbReference type="EMBL" id="U00030">
    <property type="protein sequence ID" value="AAB68360.1"/>
    <property type="molecule type" value="Genomic_DNA"/>
</dbReference>
<dbReference type="EMBL" id="BK006934">
    <property type="protein sequence ID" value="DAA06882.1"/>
    <property type="molecule type" value="Genomic_DNA"/>
</dbReference>
<dbReference type="PIR" id="S46682">
    <property type="entry name" value="S46682"/>
</dbReference>
<dbReference type="RefSeq" id="NP_012060.1">
    <property type="nucleotide sequence ID" value="NM_001179321.1"/>
</dbReference>
<dbReference type="SMR" id="P29704"/>
<dbReference type="BioGRID" id="36624">
    <property type="interactions" value="366"/>
</dbReference>
<dbReference type="DIP" id="DIP-4576N"/>
<dbReference type="FunCoup" id="P29704">
    <property type="interactions" value="391"/>
</dbReference>
<dbReference type="IntAct" id="P29704">
    <property type="interactions" value="12"/>
</dbReference>
<dbReference type="MINT" id="P29704"/>
<dbReference type="STRING" id="4932.YHR190W"/>
<dbReference type="ChEMBL" id="CHEMBL3271930"/>
<dbReference type="iPTMnet" id="P29704"/>
<dbReference type="PaxDb" id="4932-YHR190W"/>
<dbReference type="PeptideAtlas" id="P29704"/>
<dbReference type="EnsemblFungi" id="YHR190W_mRNA">
    <property type="protein sequence ID" value="YHR190W"/>
    <property type="gene ID" value="YHR190W"/>
</dbReference>
<dbReference type="GeneID" id="856597"/>
<dbReference type="KEGG" id="sce:YHR190W"/>
<dbReference type="AGR" id="SGD:S000001233"/>
<dbReference type="SGD" id="S000001233">
    <property type="gene designation" value="ERG9"/>
</dbReference>
<dbReference type="VEuPathDB" id="FungiDB:YHR190W"/>
<dbReference type="eggNOG" id="KOG1459">
    <property type="taxonomic scope" value="Eukaryota"/>
</dbReference>
<dbReference type="GeneTree" id="ENSGT00390000016034"/>
<dbReference type="HOGENOM" id="CLU_031981_2_1_1"/>
<dbReference type="InParanoid" id="P29704"/>
<dbReference type="OMA" id="GEACQLM"/>
<dbReference type="OrthoDB" id="431150at2759"/>
<dbReference type="BioCyc" id="MetaCyc:YHR190W-MONOMER"/>
<dbReference type="BioCyc" id="YEAST:YHR190W-MONOMER"/>
<dbReference type="Reactome" id="R-SCE-191273">
    <property type="pathway name" value="Cholesterol biosynthesis"/>
</dbReference>
<dbReference type="UniPathway" id="UPA00767">
    <property type="reaction ID" value="UER00751"/>
</dbReference>
<dbReference type="BioGRID-ORCS" id="856597">
    <property type="hits" value="6 hits in 10 CRISPR screens"/>
</dbReference>
<dbReference type="PRO" id="PR:P29704"/>
<dbReference type="Proteomes" id="UP000002311">
    <property type="component" value="Chromosome VIII"/>
</dbReference>
<dbReference type="RNAct" id="P29704">
    <property type="molecule type" value="protein"/>
</dbReference>
<dbReference type="GO" id="GO:0005783">
    <property type="term" value="C:endoplasmic reticulum"/>
    <property type="evidence" value="ECO:0000314"/>
    <property type="project" value="UniProt"/>
</dbReference>
<dbReference type="GO" id="GO:0005789">
    <property type="term" value="C:endoplasmic reticulum membrane"/>
    <property type="evidence" value="ECO:0000318"/>
    <property type="project" value="GO_Central"/>
</dbReference>
<dbReference type="GO" id="GO:0016020">
    <property type="term" value="C:membrane"/>
    <property type="evidence" value="ECO:0000314"/>
    <property type="project" value="SGD"/>
</dbReference>
<dbReference type="GO" id="GO:0005741">
    <property type="term" value="C:mitochondrial outer membrane"/>
    <property type="evidence" value="ECO:0007005"/>
    <property type="project" value="SGD"/>
</dbReference>
<dbReference type="GO" id="GO:0005739">
    <property type="term" value="C:mitochondrion"/>
    <property type="evidence" value="ECO:0007005"/>
    <property type="project" value="SGD"/>
</dbReference>
<dbReference type="GO" id="GO:0051996">
    <property type="term" value="F:squalene synthase [NAD(P)H] activity"/>
    <property type="evidence" value="ECO:0000314"/>
    <property type="project" value="SGD"/>
</dbReference>
<dbReference type="GO" id="GO:0006696">
    <property type="term" value="P:ergosterol biosynthetic process"/>
    <property type="evidence" value="ECO:0000314"/>
    <property type="project" value="UniProt"/>
</dbReference>
<dbReference type="GO" id="GO:0045338">
    <property type="term" value="P:farnesyl diphosphate metabolic process"/>
    <property type="evidence" value="ECO:0000318"/>
    <property type="project" value="GO_Central"/>
</dbReference>
<dbReference type="GO" id="GO:0008299">
    <property type="term" value="P:isoprenoid biosynthetic process"/>
    <property type="evidence" value="ECO:0007669"/>
    <property type="project" value="UniProtKB-KW"/>
</dbReference>
<dbReference type="CDD" id="cd00683">
    <property type="entry name" value="Trans_IPPS_HH"/>
    <property type="match status" value="1"/>
</dbReference>
<dbReference type="FunFam" id="1.10.600.10:FF:000003">
    <property type="entry name" value="Farnesyl-diphosphate farnesyltransferase 1"/>
    <property type="match status" value="1"/>
</dbReference>
<dbReference type="Gene3D" id="1.10.600.10">
    <property type="entry name" value="Farnesyl Diphosphate Synthase"/>
    <property type="match status" value="1"/>
</dbReference>
<dbReference type="InterPro" id="IPR008949">
    <property type="entry name" value="Isoprenoid_synthase_dom_sf"/>
</dbReference>
<dbReference type="InterPro" id="IPR002060">
    <property type="entry name" value="Squ/phyt_synthse"/>
</dbReference>
<dbReference type="InterPro" id="IPR006449">
    <property type="entry name" value="Squal_synth-like"/>
</dbReference>
<dbReference type="InterPro" id="IPR019845">
    <property type="entry name" value="Squalene/phytoene_synthase_CS"/>
</dbReference>
<dbReference type="InterPro" id="IPR044844">
    <property type="entry name" value="Trans_IPPS_euk-type"/>
</dbReference>
<dbReference type="InterPro" id="IPR033904">
    <property type="entry name" value="Trans_IPPS_HH"/>
</dbReference>
<dbReference type="NCBIfam" id="TIGR01559">
    <property type="entry name" value="squal_synth"/>
    <property type="match status" value="1"/>
</dbReference>
<dbReference type="PANTHER" id="PTHR11626">
    <property type="entry name" value="FARNESYL-DIPHOSPHATE FARNESYLTRANSFERASE"/>
    <property type="match status" value="1"/>
</dbReference>
<dbReference type="PANTHER" id="PTHR11626:SF2">
    <property type="entry name" value="SQUALENE SYNTHASE"/>
    <property type="match status" value="1"/>
</dbReference>
<dbReference type="Pfam" id="PF00494">
    <property type="entry name" value="SQS_PSY"/>
    <property type="match status" value="1"/>
</dbReference>
<dbReference type="SFLD" id="SFLDS00005">
    <property type="entry name" value="Isoprenoid_Synthase_Type_I"/>
    <property type="match status" value="1"/>
</dbReference>
<dbReference type="SFLD" id="SFLDG01018">
    <property type="entry name" value="Squalene/Phytoene_Synthase_Lik"/>
    <property type="match status" value="1"/>
</dbReference>
<dbReference type="SUPFAM" id="SSF48576">
    <property type="entry name" value="Terpenoid synthases"/>
    <property type="match status" value="1"/>
</dbReference>
<dbReference type="PROSITE" id="PS01044">
    <property type="entry name" value="SQUALEN_PHYTOEN_SYN_1"/>
    <property type="match status" value="1"/>
</dbReference>
<dbReference type="PROSITE" id="PS01045">
    <property type="entry name" value="SQUALEN_PHYTOEN_SYN_2"/>
    <property type="match status" value="1"/>
</dbReference>
<evidence type="ECO:0000255" key="1"/>
<evidence type="ECO:0000269" key="2">
    <source>
    </source>
</evidence>
<evidence type="ECO:0000269" key="3">
    <source>
    </source>
</evidence>
<evidence type="ECO:0000269" key="4">
    <source>
    </source>
</evidence>
<evidence type="ECO:0000269" key="5">
    <source>
    </source>
</evidence>
<evidence type="ECO:0000269" key="6">
    <source>
    </source>
</evidence>
<evidence type="ECO:0000269" key="7">
    <source>
    </source>
</evidence>
<evidence type="ECO:0000269" key="8">
    <source>
    </source>
</evidence>
<evidence type="ECO:0000303" key="9">
    <source>
    </source>
</evidence>
<evidence type="ECO:0000303" key="10">
    <source>
    </source>
</evidence>
<evidence type="ECO:0000305" key="11"/>
<evidence type="ECO:0000305" key="12">
    <source>
    </source>
</evidence>
<feature type="chain" id="PRO_0000067454" description="Squalene synthase ERG9">
    <location>
        <begin position="1"/>
        <end position="444"/>
    </location>
</feature>
<feature type="transmembrane region" description="Helical" evidence="1">
    <location>
        <begin position="421"/>
        <end position="441"/>
    </location>
</feature>
<feature type="sequence conflict" description="In Ref. 1; CAA42583." evidence="11" ref="1">
    <original>L</original>
    <variation>F</variation>
    <location>
        <position position="48"/>
    </location>
</feature>
<feature type="sequence conflict" description="In Ref. 2; AAA34597." evidence="11" ref="2">
    <original>G</original>
    <variation>S</variation>
    <location>
        <position position="286"/>
    </location>
</feature>
<feature type="sequence conflict" description="In Ref. 1; CAA42583." evidence="11" ref="1">
    <original>N</original>
    <variation>D</variation>
    <location>
        <position position="320"/>
    </location>
</feature>
<feature type="sequence conflict" description="In Ref. 1; CAA42583." evidence="11" ref="1">
    <original>Y</original>
    <variation>C</variation>
    <location>
        <position position="330"/>
    </location>
</feature>
<feature type="sequence conflict" description="In Ref. 1; CAA42583." evidence="11" ref="1">
    <original>L</original>
    <variation>S</variation>
    <location>
        <position position="429"/>
    </location>
</feature>
<name>ERG9_YEAST</name>
<keyword id="KW-0256">Endoplasmic reticulum</keyword>
<keyword id="KW-0414">Isoprene biosynthesis</keyword>
<keyword id="KW-0444">Lipid biosynthesis</keyword>
<keyword id="KW-0443">Lipid metabolism</keyword>
<keyword id="KW-0460">Magnesium</keyword>
<keyword id="KW-0472">Membrane</keyword>
<keyword id="KW-0492">Microsome</keyword>
<keyword id="KW-0511">Multifunctional enzyme</keyword>
<keyword id="KW-0521">NADP</keyword>
<keyword id="KW-1185">Reference proteome</keyword>
<keyword id="KW-0752">Steroid biosynthesis</keyword>
<keyword id="KW-0753">Steroid metabolism</keyword>
<keyword id="KW-0756">Sterol biosynthesis</keyword>
<keyword id="KW-1207">Sterol metabolism</keyword>
<keyword id="KW-0808">Transferase</keyword>
<keyword id="KW-0812">Transmembrane</keyword>
<keyword id="KW-1133">Transmembrane helix</keyword>
<comment type="function">
    <text evidence="5 6 7 8 10">Squalene synthase; part of the third module of ergosterol biosynthesis pathway that includes the late steps of the pathway (PubMed:1807826, PubMed:2068081, PubMed:8323279, PubMed:9742963). ERG9 produces squalene from 2 farnesyl pyrophosphate moieties (PubMed:1807826, PubMed:8323279). The third module or late pathway involves the ergosterol synthesis itself through consecutive reactions that mainly occur in the endoplasmic reticulum (ER) membrane. Firstly, the squalene synthase ERG9 catalyzes the condensation of 2 farnesyl pyrophosphate moieties to form squalene, which is the precursor of all steroids. Squalene synthase is crucial for balancing the incorporation of farnesyl diphosphate (FPP) into sterol and nonsterol isoprene synthesis. Secondly, the squalene epoxidase ERG1 catalyzes the stereospecific oxidation of squalene to (S)-2,3-epoxysqualene, which is considered to be a rate-limiting enzyme in steroid biosynthesis. Then, the lanosterol synthase ERG7 catalyzes the cyclization of (S)-2,3 oxidosqualene to lanosterol, a reaction that forms the sterol core. In the next steps, lanosterol is transformed to zymosterol through a complex process involving various demethylation, reduction and desaturation reactions. The lanosterol 14-alpha-demethylase ERG11 (also known as CYP51) catalyzes C14-demethylation of lanosterol to produce 4,4'-dimethyl cholesta-8,14,24-triene-3-beta-ol, which is critical for ergosterol biosynthesis. The C-14 reductase ERG24 reduces the C14=C15 double bond of 4,4-dimethyl-cholesta-8,14,24-trienol to produce 4,4-dimethyl-cholesta-8,24-dienol. 4,4-dimethyl-cholesta-8,24-dienol is substrate of the C-4 demethylation complex ERG25-ERG26-ERG27 in which ERG25 catalyzes the three-step monooxygenation required for the demethylation of 4,4-dimethyl and 4alpha-methylsterols, ERG26 catalyzes the oxidative decarboxylation that results in a reduction of the 3-beta-hydroxy group at the C-3 carbon to an oxo group, and ERG27 is responsible for the reduction of the keto group on the C-3. ERG28 has a role as a scaffold to help anchor ERG25, ERG26 and ERG27 to the endoplasmic reticulum and ERG29 regulates the activity of the iron-containing C4-methylsterol oxidase ERG25. Then, the sterol 24-C-methyltransferase ERG6 catalyzes the methyl transfer from S-adenosyl-methionine to the C-24 of zymosterol to form fecosterol. The C-8 sterol isomerase ERG2 catalyzes the reaction which results in unsaturation at C-7 in the B ring of sterols and thus converts fecosterol to episterol. The sterol-C5-desaturase ERG3 then catalyzes the introduction of a C-5 double bond in the B ring to produce 5-dehydroepisterol. The C-22 sterol desaturase ERG5 further converts 5-dehydroepisterol into ergosta-5,7,22,24(28)-tetraen-3beta-ol by forming the C-22(23) double bond in the sterol side chain. Finally, ergosta-5,7,22,24(28)-tetraen-3beta-ol is substrate of the C-24(28) sterol reductase ERG4 to produce ergosterol (PubMed:32679672).</text>
</comment>
<comment type="catalytic activity">
    <reaction evidence="5 7">
        <text>2 (2E,6E)-farnesyl diphosphate + NADPH + H(+) = squalene + 2 diphosphate + NADP(+)</text>
        <dbReference type="Rhea" id="RHEA:32295"/>
        <dbReference type="ChEBI" id="CHEBI:15378"/>
        <dbReference type="ChEBI" id="CHEBI:15440"/>
        <dbReference type="ChEBI" id="CHEBI:33019"/>
        <dbReference type="ChEBI" id="CHEBI:57783"/>
        <dbReference type="ChEBI" id="CHEBI:58349"/>
        <dbReference type="ChEBI" id="CHEBI:175763"/>
        <dbReference type="EC" id="2.5.1.21"/>
    </reaction>
    <physiologicalReaction direction="left-to-right" evidence="5 7">
        <dbReference type="Rhea" id="RHEA:32296"/>
    </physiologicalReaction>
</comment>
<comment type="catalytic activity">
    <reaction evidence="5 7">
        <text>2 (2E,6E)-farnesyl diphosphate + NADH + H(+) = squalene + 2 diphosphate + NAD(+)</text>
        <dbReference type="Rhea" id="RHEA:32299"/>
        <dbReference type="ChEBI" id="CHEBI:15378"/>
        <dbReference type="ChEBI" id="CHEBI:15440"/>
        <dbReference type="ChEBI" id="CHEBI:33019"/>
        <dbReference type="ChEBI" id="CHEBI:57540"/>
        <dbReference type="ChEBI" id="CHEBI:57945"/>
        <dbReference type="ChEBI" id="CHEBI:175763"/>
        <dbReference type="EC" id="2.5.1.21"/>
    </reaction>
    <physiologicalReaction direction="left-to-right" evidence="5 7">
        <dbReference type="Rhea" id="RHEA:32300"/>
    </physiologicalReaction>
</comment>
<comment type="cofactor">
    <cofactor evidence="7">
        <name>Mg(2+)</name>
        <dbReference type="ChEBI" id="CHEBI:18420"/>
    </cofactor>
</comment>
<comment type="pathway">
    <text evidence="5 6 7">Terpene metabolism; lanosterol biosynthesis; lanosterol from farnesyl diphosphate: step 1/3.</text>
</comment>
<comment type="interaction">
    <interactant intactId="EBI-6865">
        <id>P29704</id>
    </interactant>
    <interactant intactId="EBI-6514">
        <id>P53199</id>
        <label>ERG26</label>
    </interactant>
    <organismsDiffer>false</organismsDiffer>
    <experiments>2</experiments>
</comment>
<comment type="subcellular location">
    <subcellularLocation>
        <location evidence="3 5">Endoplasmic reticulum membrane</location>
        <topology evidence="1">Single-pass membrane protein</topology>
    </subcellularLocation>
    <subcellularLocation>
        <location evidence="12">Microsome</location>
    </subcellularLocation>
</comment>
<comment type="induction">
    <text evidence="2">Expression is increased in mutants with phenotypes consistent with known sterol biosynthetic mutations (ERG3, ERG7, ERG24) (PubMed:10209263). The sterol inhibitors zaragozic acid and ketoconazole, which target squalene synthase and the C-14 sterol demethylase respectively, also cause an increase in expression (PubMed:10209263). Heme mutants increase ERG9 expression while anaerobic conditions decrease expression (PubMed:10209263). Additionally, the heme activator protein transcription factors HAP1 and HAP2/3/4, the yeast activator protein transcription factor yAP-1, and the phospholipid transcription factor complex INO2/4 regulate ERG9 expression (PubMed:10209263).</text>
</comment>
<comment type="disruption phenotype">
    <text evidence="6 8">Impairs the production of ergosterol and leads to a 6-fold increase in the synthesis of polyprenols.</text>
</comment>
<comment type="miscellaneous">
    <text evidence="4">Present with 10800 molecules/cell in log phase SD medium.</text>
</comment>
<comment type="similarity">
    <text evidence="11">Belongs to the phytoene/squalene synthase family.</text>
</comment>
<organism>
    <name type="scientific">Saccharomyces cerevisiae (strain ATCC 204508 / S288c)</name>
    <name type="common">Baker's yeast</name>
    <dbReference type="NCBI Taxonomy" id="559292"/>
    <lineage>
        <taxon>Eukaryota</taxon>
        <taxon>Fungi</taxon>
        <taxon>Dikarya</taxon>
        <taxon>Ascomycota</taxon>
        <taxon>Saccharomycotina</taxon>
        <taxon>Saccharomycetes</taxon>
        <taxon>Saccharomycetales</taxon>
        <taxon>Saccharomycetaceae</taxon>
        <taxon>Saccharomyces</taxon>
    </lineage>
</organism>
<protein>
    <recommendedName>
        <fullName evidence="9">Squalene synthase ERG9</fullName>
        <shortName evidence="9">SQS</shortName>
        <shortName evidence="9">SS</shortName>
        <ecNumber evidence="5 7">2.5.1.21</ecNumber>
    </recommendedName>
    <alternativeName>
        <fullName evidence="9">Ergosterol biosynthetic protein 9</fullName>
    </alternativeName>
    <alternativeName>
        <fullName evidence="11">FPP:FPP farnesyltransferase ERG9</fullName>
    </alternativeName>
    <alternativeName>
        <fullName evidence="11">Farnesyl-diphosphate farnesyltransferase ERG9</fullName>
    </alternativeName>
</protein>
<proteinExistence type="evidence at protein level"/>
<reference key="1">
    <citation type="journal article" date="1991" name="Curr. Genet.">
        <title>Isolation and primary structure of the ERG9 gene of Saccharomyces cerevisiae encoding squalene synthetase.</title>
        <authorList>
            <person name="Fegueur M."/>
            <person name="Richard L."/>
            <person name="Charles A.D."/>
            <person name="Karst F."/>
        </authorList>
    </citation>
    <scope>NUCLEOTIDE SEQUENCE [GENOMIC DNA]</scope>
    <scope>FUNCTION</scope>
    <scope>CATALYTIC ACTIVITY</scope>
    <scope>SUBCELLULAR LOCATION</scope>
    <scope>PATHWAY</scope>
</reference>
<reference key="2">
    <citation type="journal article" date="1991" name="Proc. Natl. Acad. Sci. U.S.A.">
        <title>Molecular cloning and characterization of the yeast gene for squalene synthetase.</title>
        <authorList>
            <person name="Jennings S.M."/>
            <person name="Tsay Y.H."/>
            <person name="Fisch T.M."/>
            <person name="Robinson G.W."/>
        </authorList>
    </citation>
    <scope>NUCLEOTIDE SEQUENCE [GENOMIC DNA]</scope>
    <scope>IDENTIFICATION</scope>
    <scope>FUNCTION</scope>
    <scope>DISRUPTION PHENOTYPE</scope>
    <scope>PATHWAY</scope>
</reference>
<reference key="3">
    <citation type="journal article" date="1994" name="Science">
        <title>Complete nucleotide sequence of Saccharomyces cerevisiae chromosome VIII.</title>
        <authorList>
            <person name="Johnston M."/>
            <person name="Andrews S."/>
            <person name="Brinkman R."/>
            <person name="Cooper J."/>
            <person name="Ding H."/>
            <person name="Dover J."/>
            <person name="Du Z."/>
            <person name="Favello A."/>
            <person name="Fulton L."/>
            <person name="Gattung S."/>
            <person name="Geisel C."/>
            <person name="Kirsten J."/>
            <person name="Kucaba T."/>
            <person name="Hillier L.W."/>
            <person name="Jier M."/>
            <person name="Johnston L."/>
            <person name="Langston Y."/>
            <person name="Latreille P."/>
            <person name="Louis E.J."/>
            <person name="Macri C."/>
            <person name="Mardis E."/>
            <person name="Menezes S."/>
            <person name="Mouser L."/>
            <person name="Nhan M."/>
            <person name="Rifkin L."/>
            <person name="Riles L."/>
            <person name="St Peter H."/>
            <person name="Trevaskis E."/>
            <person name="Vaughan K."/>
            <person name="Vignati D."/>
            <person name="Wilcox L."/>
            <person name="Wohldman P."/>
            <person name="Waterston R."/>
            <person name="Wilson R."/>
            <person name="Vaudin M."/>
        </authorList>
    </citation>
    <scope>NUCLEOTIDE SEQUENCE [LARGE SCALE GENOMIC DNA]</scope>
    <source>
        <strain>ATCC 204508 / S288c</strain>
    </source>
</reference>
<reference key="4">
    <citation type="journal article" date="2014" name="G3 (Bethesda)">
        <title>The reference genome sequence of Saccharomyces cerevisiae: Then and now.</title>
        <authorList>
            <person name="Engel S.R."/>
            <person name="Dietrich F.S."/>
            <person name="Fisk D.G."/>
            <person name="Binkley G."/>
            <person name="Balakrishnan R."/>
            <person name="Costanzo M.C."/>
            <person name="Dwight S.S."/>
            <person name="Hitz B.C."/>
            <person name="Karra K."/>
            <person name="Nash R.S."/>
            <person name="Weng S."/>
            <person name="Wong E.D."/>
            <person name="Lloyd P."/>
            <person name="Skrzypek M.S."/>
            <person name="Miyasato S.R."/>
            <person name="Simison M."/>
            <person name="Cherry J.M."/>
        </authorList>
    </citation>
    <scope>GENOME REANNOTATION</scope>
    <source>
        <strain>ATCC 204508 / S288c</strain>
    </source>
</reference>
<reference key="5">
    <citation type="journal article" date="1993" name="Arch. Biochem. Biophys.">
        <title>Yeast squalene synthase: expression, purification, and characterization of soluble recombinant enzyme.</title>
        <authorList>
            <person name="Zhang D."/>
            <person name="Jennings S.M."/>
            <person name="Robinson G.W."/>
            <person name="Poulter C.D."/>
        </authorList>
    </citation>
    <scope>FUNCTION</scope>
    <scope>CATALYTIC ACTIVITY</scope>
    <scope>COFACTOR</scope>
    <scope>PATHWAY</scope>
</reference>
<reference key="6">
    <citation type="journal article" date="1996" name="J. Biol. Chem.">
        <title>Characterization of yeast methyl sterol oxidase (ERG25) and identification of a human homologue.</title>
        <authorList>
            <person name="Li L."/>
            <person name="Kaplan J."/>
        </authorList>
    </citation>
    <scope>FUNCTION</scope>
</reference>
<reference key="7">
    <citation type="journal article" date="1998" name="FEBS Lett.">
        <title>Effect of squalene synthase gene disruption on synthesis of polyprenols in Saccharomyces cerevisiae.</title>
        <authorList>
            <person name="Grabowska D."/>
            <person name="Karst F."/>
            <person name="Szkopinska A."/>
        </authorList>
    </citation>
    <scope>FUNCTION</scope>
    <scope>DISRUPTION PHENOTYPE</scope>
</reference>
<reference key="8">
    <citation type="journal article" date="1999" name="Biochim. Biophys. Acta">
        <title>Transcriptional regulation of the squalene synthase gene (ERG9) in the yeast Saccharomyces cerevisiae.</title>
        <authorList>
            <person name="Kennedy M.A."/>
            <person name="Barbuch R."/>
            <person name="Bard M."/>
        </authorList>
    </citation>
    <scope>INDUCTION</scope>
</reference>
<reference key="9">
    <citation type="journal article" date="2003" name="Nature">
        <title>Global analysis of protein localization in budding yeast.</title>
        <authorList>
            <person name="Huh W.-K."/>
            <person name="Falvo J.V."/>
            <person name="Gerke L.C."/>
            <person name="Carroll A.S."/>
            <person name="Howson R.W."/>
            <person name="Weissman J.S."/>
            <person name="O'Shea E.K."/>
        </authorList>
    </citation>
    <scope>SUBCELLULAR LOCATION [LARGE SCALE ANALYSIS]</scope>
</reference>
<reference key="10">
    <citation type="journal article" date="2003" name="Nature">
        <title>Global analysis of protein expression in yeast.</title>
        <authorList>
            <person name="Ghaemmaghami S."/>
            <person name="Huh W.-K."/>
            <person name="Bower K."/>
            <person name="Howson R.W."/>
            <person name="Belle A."/>
            <person name="Dephoure N."/>
            <person name="O'Shea E.K."/>
            <person name="Weissman J.S."/>
        </authorList>
    </citation>
    <scope>LEVEL OF PROTEIN EXPRESSION [LARGE SCALE ANALYSIS]</scope>
</reference>
<reference key="11">
    <citation type="journal article" date="2020" name="Genes (Basel)">
        <title>Regulation of ergosterol biosynthesis in Saccharomyces cerevisiae.</title>
        <authorList>
            <person name="Jorda T."/>
            <person name="Puig S."/>
        </authorList>
    </citation>
    <scope>REVIEW ON ERGOSTEROL BIOSYNTHESIS</scope>
</reference>
<sequence>MGKLLQLALHPVEMKAALKLKFCRTPLFSIYDQSTSPYLLHCFELLNLTSRSFAAVIRELHPELRNCVTLFYLILRALDTIEDDMSIEHDLKIDLLRHFHEKLLLTKWSFDGNAPDVKDRAVLTDFESILIEFHKLKPEYQEVIKEITEKMGNGMADYILDENYNLNGLQTVHDYDVYCHYVAGLVGDGLTRLIVIAKFANESLYSNEQLYESMGLFLQKTNIIRDYNEDLVDGRSFWPKEIWSQYAPQLKDFMKPENEQLGLDCINHLVLNALSHVIDVLTYLAGIHEQSTFQFCAIPQVMAIATLALVFNNREVLHGNVKIRKGTTCYLILKSRTLRGCVEIFDYYLRDIKSKLAVQDPNFLKLNIQISKIEQFMEEMYQDKLPPNVKPNETPIFLKVKERSRYDDELVPTQQEEEYKFNMVLSIILSVLLGFYYIYTLHRA</sequence>
<accession>P29704</accession>
<accession>D3DLD8</accession>
<gene>
    <name evidence="9" type="primary">ERG9</name>
    <name type="ordered locus">YHR190W</name>
</gene>